<name>CSOR_MYCBP</name>
<dbReference type="EMBL" id="AM408590">
    <property type="protein sequence ID" value="CAL71008.1"/>
    <property type="molecule type" value="Genomic_DNA"/>
</dbReference>
<dbReference type="RefSeq" id="WP_003404935.1">
    <property type="nucleotide sequence ID" value="NC_008769.1"/>
</dbReference>
<dbReference type="SMR" id="A1KHA2"/>
<dbReference type="KEGG" id="mbb:BCG_1021"/>
<dbReference type="HOGENOM" id="CLU_130332_1_1_11"/>
<dbReference type="Proteomes" id="UP000001472">
    <property type="component" value="Chromosome"/>
</dbReference>
<dbReference type="GO" id="GO:0005737">
    <property type="term" value="C:cytoplasm"/>
    <property type="evidence" value="ECO:0007669"/>
    <property type="project" value="UniProtKB-SubCell"/>
</dbReference>
<dbReference type="GO" id="GO:0003677">
    <property type="term" value="F:DNA binding"/>
    <property type="evidence" value="ECO:0007669"/>
    <property type="project" value="UniProtKB-KW"/>
</dbReference>
<dbReference type="GO" id="GO:0046872">
    <property type="term" value="F:metal ion binding"/>
    <property type="evidence" value="ECO:0007669"/>
    <property type="project" value="UniProtKB-KW"/>
</dbReference>
<dbReference type="GO" id="GO:0045892">
    <property type="term" value="P:negative regulation of DNA-templated transcription"/>
    <property type="evidence" value="ECO:0007669"/>
    <property type="project" value="UniProtKB-ARBA"/>
</dbReference>
<dbReference type="CDD" id="cd10151">
    <property type="entry name" value="TthCsoR-like_DUF156"/>
    <property type="match status" value="1"/>
</dbReference>
<dbReference type="FunFam" id="1.20.58.1000:FF:000004">
    <property type="entry name" value="Copper-sensing transcriptional repressor CsoR"/>
    <property type="match status" value="1"/>
</dbReference>
<dbReference type="Gene3D" id="1.20.58.1000">
    <property type="entry name" value="Metal-sensitive repressor, helix protomer"/>
    <property type="match status" value="1"/>
</dbReference>
<dbReference type="InterPro" id="IPR003735">
    <property type="entry name" value="Metal_Tscrpt_repr"/>
</dbReference>
<dbReference type="InterPro" id="IPR038390">
    <property type="entry name" value="Metal_Tscrpt_repr_sf"/>
</dbReference>
<dbReference type="PANTHER" id="PTHR33677:SF4">
    <property type="entry name" value="COPPER-SENSING TRANSCRIPTIONAL REPRESSOR CSOR"/>
    <property type="match status" value="1"/>
</dbReference>
<dbReference type="PANTHER" id="PTHR33677">
    <property type="entry name" value="TRANSCRIPTIONAL REPRESSOR FRMR-RELATED"/>
    <property type="match status" value="1"/>
</dbReference>
<dbReference type="Pfam" id="PF02583">
    <property type="entry name" value="Trns_repr_metal"/>
    <property type="match status" value="1"/>
</dbReference>
<comment type="function">
    <text evidence="1">Copper-sensitive repressor that has a key role in copper homeostasis. It is part of the cso operon involved in the cellular response to increasing concentrations of copper inside the bacterium, which can be highly toxic. In the presence of copper, CsoR fully dissociates from the promoter in the cso operon, leading to the transcription of its genes. Binds to a GC-rich pseudopallindromic sequence, 5'-GTAGCCCACCCCCAGTGGGGTGGGA-3', in the cso promoter region (By similarity).</text>
</comment>
<comment type="subunit">
    <text evidence="1">Homodimer.</text>
</comment>
<comment type="subcellular location">
    <subcellularLocation>
        <location evidence="1">Cytoplasm</location>
    </subcellularLocation>
</comment>
<comment type="domain">
    <text evidence="1">This protein has an antiparallel four-helix bundle architecture that represents a novel DNA-binding fold.</text>
</comment>
<comment type="similarity">
    <text evidence="3">Belongs to the CsoR family.</text>
</comment>
<feature type="chain" id="PRO_0000295580" description="Copper-sensing transcriptional repressor CsoR">
    <location>
        <begin position="1"/>
        <end position="119"/>
    </location>
</feature>
<feature type="region of interest" description="Disordered" evidence="2">
    <location>
        <begin position="99"/>
        <end position="119"/>
    </location>
</feature>
<feature type="binding site" description="in other chain" evidence="1">
    <location>
        <position position="36"/>
    </location>
    <ligand>
        <name>Cu cation</name>
        <dbReference type="ChEBI" id="CHEBI:23378"/>
        <note>ligand shared between dimeric partners</note>
    </ligand>
</feature>
<feature type="binding site" evidence="1">
    <location>
        <position position="61"/>
    </location>
    <ligand>
        <name>Cu cation</name>
        <dbReference type="ChEBI" id="CHEBI:23378"/>
        <note>ligand shared between dimeric partners</note>
    </ligand>
</feature>
<feature type="binding site" evidence="1">
    <location>
        <position position="65"/>
    </location>
    <ligand>
        <name>Cu cation</name>
        <dbReference type="ChEBI" id="CHEBI:23378"/>
        <note>ligand shared between dimeric partners</note>
    </ligand>
</feature>
<accession>A1KHA2</accession>
<gene>
    <name type="primary">csoR</name>
    <name type="ordered locus">BCG_1021</name>
</gene>
<sequence>MSKELTAKKRAALNRLKTVRGHLDGIVRMLESDAYCVDVMKQISAVQSSLERANRVMLHNHLETCFSTAVLDGHGQAAIEELIDAVKFTPALTGPHARLGGAAVGESATEEPMPDASNM</sequence>
<protein>
    <recommendedName>
        <fullName>Copper-sensing transcriptional repressor CsoR</fullName>
    </recommendedName>
    <alternativeName>
        <fullName>Copper-sensitive operon repressor</fullName>
    </alternativeName>
</protein>
<organism>
    <name type="scientific">Mycobacterium bovis (strain BCG / Pasteur 1173P2)</name>
    <dbReference type="NCBI Taxonomy" id="410289"/>
    <lineage>
        <taxon>Bacteria</taxon>
        <taxon>Bacillati</taxon>
        <taxon>Actinomycetota</taxon>
        <taxon>Actinomycetes</taxon>
        <taxon>Mycobacteriales</taxon>
        <taxon>Mycobacteriaceae</taxon>
        <taxon>Mycobacterium</taxon>
        <taxon>Mycobacterium tuberculosis complex</taxon>
    </lineage>
</organism>
<reference key="1">
    <citation type="journal article" date="2007" name="Proc. Natl. Acad. Sci. U.S.A.">
        <title>Genome plasticity of BCG and impact on vaccine efficacy.</title>
        <authorList>
            <person name="Brosch R."/>
            <person name="Gordon S.V."/>
            <person name="Garnier T."/>
            <person name="Eiglmeier K."/>
            <person name="Frigui W."/>
            <person name="Valenti P."/>
            <person name="Dos Santos S."/>
            <person name="Duthoy S."/>
            <person name="Lacroix C."/>
            <person name="Garcia-Pelayo C."/>
            <person name="Inwald J.K."/>
            <person name="Golby P."/>
            <person name="Garcia J.N."/>
            <person name="Hewinson R.G."/>
            <person name="Behr M.A."/>
            <person name="Quail M.A."/>
            <person name="Churcher C."/>
            <person name="Barrell B.G."/>
            <person name="Parkhill J."/>
            <person name="Cole S.T."/>
        </authorList>
    </citation>
    <scope>NUCLEOTIDE SEQUENCE [LARGE SCALE GENOMIC DNA]</scope>
    <source>
        <strain>BCG / Pasteur 1173P2</strain>
    </source>
</reference>
<keyword id="KW-0186">Copper</keyword>
<keyword id="KW-0963">Cytoplasm</keyword>
<keyword id="KW-0238">DNA-binding</keyword>
<keyword id="KW-0479">Metal-binding</keyword>
<keyword id="KW-0678">Repressor</keyword>
<keyword id="KW-0804">Transcription</keyword>
<keyword id="KW-0805">Transcription regulation</keyword>
<evidence type="ECO:0000250" key="1"/>
<evidence type="ECO:0000256" key="2">
    <source>
        <dbReference type="SAM" id="MobiDB-lite"/>
    </source>
</evidence>
<evidence type="ECO:0000305" key="3"/>
<proteinExistence type="inferred from homology"/>